<protein>
    <recommendedName>
        <fullName>E3 ubiquitin-protein ligase SINA-like 5</fullName>
        <ecNumber>2.3.2.27</ecNumber>
    </recommendedName>
    <alternativeName>
        <fullName evidence="5">RING-type E3 ubiquitin transferase SINA-like 5</fullName>
    </alternativeName>
    <alternativeName>
        <fullName>Seven in absentia-like protein 5</fullName>
    </alternativeName>
</protein>
<gene>
    <name type="ordered locus">At1g66660</name>
    <name type="ORF">F4N21_20</name>
    <name type="ORF">T12I7.11</name>
</gene>
<sequence length="328" mass="37320">MARSGGNDGHEEELDPELFEEPSNLEGYEDGEFEEDEEEFEEEEEELEEEEDEEEEEEENVTTDEQSGSPKSSQPVKLQSSDVLDCPTCCEPLKRPIYQCSNGHLACSSCCQKLNKKCSFCRCNIGDIRCRAMEKVIEASIVPCPNAKHGCKETTTYCNQSSHEKVCKFVRCSCPVSNCNYVSSYSNLKSHACSTAHVWGEDDIHFQLVIDRPRIFNMNLGRKKTVVFKEEKEGDLIVVQAFKGLEGVYVTVNRIAHMAPGIRDLSCSLAKLNEYSTLRSGSLVKKIQKVREKMHLEDDLMWIPPKMLSGDHWKMQICIAYGYKFIHI</sequence>
<organism>
    <name type="scientific">Arabidopsis thaliana</name>
    <name type="common">Mouse-ear cress</name>
    <dbReference type="NCBI Taxonomy" id="3702"/>
    <lineage>
        <taxon>Eukaryota</taxon>
        <taxon>Viridiplantae</taxon>
        <taxon>Streptophyta</taxon>
        <taxon>Embryophyta</taxon>
        <taxon>Tracheophyta</taxon>
        <taxon>Spermatophyta</taxon>
        <taxon>Magnoliopsida</taxon>
        <taxon>eudicotyledons</taxon>
        <taxon>Gunneridae</taxon>
        <taxon>Pentapetalae</taxon>
        <taxon>rosids</taxon>
        <taxon>malvids</taxon>
        <taxon>Brassicales</taxon>
        <taxon>Brassicaceae</taxon>
        <taxon>Camelineae</taxon>
        <taxon>Arabidopsis</taxon>
    </lineage>
</organism>
<evidence type="ECO:0000250" key="1"/>
<evidence type="ECO:0000255" key="2">
    <source>
        <dbReference type="PROSITE-ProRule" id="PRU00455"/>
    </source>
</evidence>
<evidence type="ECO:0000256" key="3">
    <source>
        <dbReference type="SAM" id="MobiDB-lite"/>
    </source>
</evidence>
<evidence type="ECO:0000303" key="4">
    <source>
    </source>
</evidence>
<evidence type="ECO:0000305" key="5"/>
<comment type="function">
    <text evidence="1">E3 ubiquitin-protein ligase that mediates ubiquitination and subsequent proteasomal degradation of target proteins. E3 ubiquitin ligases accept ubiquitin from an E2 ubiquitin-conjugating enzyme in the form of a thioester and then directly transfers the ubiquitin to targeted substrates. It probably triggers the ubiquitin-mediated degradation of different substrates.</text>
</comment>
<comment type="catalytic activity">
    <reaction>
        <text>S-ubiquitinyl-[E2 ubiquitin-conjugating enzyme]-L-cysteine + [acceptor protein]-L-lysine = [E2 ubiquitin-conjugating enzyme]-L-cysteine + N(6)-ubiquitinyl-[acceptor protein]-L-lysine.</text>
        <dbReference type="EC" id="2.3.2.27"/>
    </reaction>
</comment>
<comment type="pathway">
    <text>Protein modification; protein ubiquitination.</text>
</comment>
<comment type="alternative products">
    <event type="alternative splicing"/>
    <isoform>
        <id>Q7XA77-1</id>
        <name>1</name>
        <sequence type="displayed"/>
    </isoform>
    <isoform>
        <id>Q7XA77-2</id>
        <name>2</name>
        <sequence type="described" ref="VSP_027591 VSP_027592"/>
    </isoform>
</comment>
<comment type="domain">
    <text evidence="1">The RING-type zinc finger domain is essential for ubiquitin ligase activity.</text>
</comment>
<comment type="domain">
    <text evidence="1">The SBD domain (substrate-binding domain) mediates the homodimerization and the interaction with substrate proteins. It is related to the TRAF family.</text>
</comment>
<comment type="similarity">
    <text evidence="5">Belongs to the SINA (Seven in absentia) family.</text>
</comment>
<comment type="sequence caution" evidence="5">
    <conflict type="erroneous gene model prediction">
        <sequence resource="EMBL-CDS" id="AAG51171"/>
    </conflict>
</comment>
<comment type="sequence caution" evidence="5">
    <conflict type="erroneous gene model prediction">
        <sequence resource="EMBL-CDS" id="AAG60077"/>
    </conflict>
</comment>
<feature type="chain" id="PRO_0000299194" description="E3 ubiquitin-protein ligase SINA-like 5">
    <location>
        <begin position="1"/>
        <end position="328"/>
    </location>
</feature>
<feature type="zinc finger region" description="RING-type; degenerate">
    <location>
        <begin position="86"/>
        <end position="122"/>
    </location>
</feature>
<feature type="zinc finger region" description="SIAH-type; degenerate" evidence="2">
    <location>
        <begin position="139"/>
        <end position="197"/>
    </location>
</feature>
<feature type="region of interest" description="Disordered" evidence="3">
    <location>
        <begin position="1"/>
        <end position="77"/>
    </location>
</feature>
<feature type="region of interest" description="SBD" evidence="1">
    <location>
        <begin position="136"/>
        <end position="324"/>
    </location>
</feature>
<feature type="compositionally biased region" description="Acidic residues" evidence="3">
    <location>
        <begin position="10"/>
        <end position="20"/>
    </location>
</feature>
<feature type="compositionally biased region" description="Acidic residues" evidence="3">
    <location>
        <begin position="27"/>
        <end position="62"/>
    </location>
</feature>
<feature type="compositionally biased region" description="Polar residues" evidence="3">
    <location>
        <begin position="63"/>
        <end position="77"/>
    </location>
</feature>
<feature type="binding site" evidence="1">
    <location>
        <position position="144"/>
    </location>
    <ligand>
        <name>Zn(2+)</name>
        <dbReference type="ChEBI" id="CHEBI:29105"/>
        <label>1</label>
    </ligand>
</feature>
<feature type="binding site" evidence="1">
    <location>
        <position position="151"/>
    </location>
    <ligand>
        <name>Zn(2+)</name>
        <dbReference type="ChEBI" id="CHEBI:29105"/>
        <label>1</label>
    </ligand>
</feature>
<feature type="binding site" evidence="1">
    <location>
        <position position="163"/>
    </location>
    <ligand>
        <name>Zn(2+)</name>
        <dbReference type="ChEBI" id="CHEBI:29105"/>
        <label>1</label>
    </ligand>
</feature>
<feature type="binding site" evidence="1">
    <location>
        <position position="167"/>
    </location>
    <ligand>
        <name>Zn(2+)</name>
        <dbReference type="ChEBI" id="CHEBI:29105"/>
        <label>1</label>
    </ligand>
</feature>
<feature type="binding site" evidence="1">
    <location>
        <position position="174"/>
    </location>
    <ligand>
        <name>Zn(2+)</name>
        <dbReference type="ChEBI" id="CHEBI:29105"/>
        <label>2</label>
    </ligand>
</feature>
<feature type="binding site" evidence="1">
    <location>
        <position position="179"/>
    </location>
    <ligand>
        <name>Zn(2+)</name>
        <dbReference type="ChEBI" id="CHEBI:29105"/>
        <label>2</label>
    </ligand>
</feature>
<feature type="binding site" evidence="1">
    <location>
        <position position="191"/>
    </location>
    <ligand>
        <name>Zn(2+)</name>
        <dbReference type="ChEBI" id="CHEBI:29105"/>
        <label>2</label>
    </ligand>
</feature>
<feature type="binding site" evidence="1">
    <location>
        <position position="197"/>
    </location>
    <ligand>
        <name>Zn(2+)</name>
        <dbReference type="ChEBI" id="CHEBI:29105"/>
        <label>2</label>
    </ligand>
</feature>
<feature type="splice variant" id="VSP_027591" description="In isoform 2." evidence="4">
    <location>
        <begin position="1"/>
        <end position="104"/>
    </location>
</feature>
<feature type="splice variant" id="VSP_027592" description="In isoform 2." evidence="4">
    <original>LACSSCCQKLNKKCSFC</original>
    <variation>MFSIVLLVVNHSRDQSI</variation>
    <location>
        <begin position="105"/>
        <end position="121"/>
    </location>
</feature>
<accession>Q7XA77</accession>
<accession>Q9C511</accession>
<proteinExistence type="evidence at transcript level"/>
<dbReference type="EC" id="2.3.2.27"/>
<dbReference type="EMBL" id="AC013288">
    <property type="protein sequence ID" value="AAG60077.1"/>
    <property type="status" value="ALT_SEQ"/>
    <property type="molecule type" value="Genomic_DNA"/>
</dbReference>
<dbReference type="EMBL" id="AC079285">
    <property type="protein sequence ID" value="AAG51171.1"/>
    <property type="status" value="ALT_SEQ"/>
    <property type="molecule type" value="Genomic_DNA"/>
</dbReference>
<dbReference type="EMBL" id="CP002684">
    <property type="protein sequence ID" value="AEE34541.1"/>
    <property type="molecule type" value="Genomic_DNA"/>
</dbReference>
<dbReference type="EMBL" id="BT010157">
    <property type="protein sequence ID" value="AAQ22626.1"/>
    <property type="molecule type" value="mRNA"/>
</dbReference>
<dbReference type="RefSeq" id="NP_176839.2">
    <molecule id="Q7XA77-2"/>
    <property type="nucleotide sequence ID" value="NM_105337.2"/>
</dbReference>
<dbReference type="FunCoup" id="Q7XA77">
    <property type="interactions" value="67"/>
</dbReference>
<dbReference type="STRING" id="3702.Q7XA77"/>
<dbReference type="PaxDb" id="3702-AT1G66660.2"/>
<dbReference type="EnsemblPlants" id="AT1G66660.1">
    <molecule id="Q7XA77-2"/>
    <property type="protein sequence ID" value="AT1G66660.1"/>
    <property type="gene ID" value="AT1G66660"/>
</dbReference>
<dbReference type="GeneID" id="842984"/>
<dbReference type="Gramene" id="AT1G66660.1">
    <molecule id="Q7XA77-2"/>
    <property type="protein sequence ID" value="AT1G66660.1"/>
    <property type="gene ID" value="AT1G66660"/>
</dbReference>
<dbReference type="KEGG" id="ath:AT1G66660"/>
<dbReference type="Araport" id="AT1G66660"/>
<dbReference type="TAIR" id="AT1G66660"/>
<dbReference type="eggNOG" id="KOG3002">
    <property type="taxonomic scope" value="Eukaryota"/>
</dbReference>
<dbReference type="InParanoid" id="Q7XA77"/>
<dbReference type="PhylomeDB" id="Q7XA77"/>
<dbReference type="UniPathway" id="UPA00143"/>
<dbReference type="PRO" id="PR:Q7XA77"/>
<dbReference type="Proteomes" id="UP000006548">
    <property type="component" value="Chromosome 1"/>
</dbReference>
<dbReference type="ExpressionAtlas" id="Q7XA77">
    <property type="expression patterns" value="baseline and differential"/>
</dbReference>
<dbReference type="GO" id="GO:0016740">
    <property type="term" value="F:transferase activity"/>
    <property type="evidence" value="ECO:0007669"/>
    <property type="project" value="UniProtKB-KW"/>
</dbReference>
<dbReference type="GO" id="GO:0008270">
    <property type="term" value="F:zinc ion binding"/>
    <property type="evidence" value="ECO:0007669"/>
    <property type="project" value="UniProtKB-KW"/>
</dbReference>
<dbReference type="GO" id="GO:0016567">
    <property type="term" value="P:protein ubiquitination"/>
    <property type="evidence" value="ECO:0007669"/>
    <property type="project" value="UniProtKB-UniPathway"/>
</dbReference>
<dbReference type="CDD" id="cd16571">
    <property type="entry name" value="RING-HC_SIAHs"/>
    <property type="match status" value="1"/>
</dbReference>
<dbReference type="FunFam" id="3.30.40.10:FF:000840">
    <property type="entry name" value="E3 ubiquitin-protein ligase SINA-like 5"/>
    <property type="match status" value="1"/>
</dbReference>
<dbReference type="Gene3D" id="3.30.40.10">
    <property type="entry name" value="Zinc/RING finger domain, C3HC4 (zinc finger)"/>
    <property type="match status" value="1"/>
</dbReference>
<dbReference type="InterPro" id="IPR049548">
    <property type="entry name" value="Sina-like_RING"/>
</dbReference>
<dbReference type="InterPro" id="IPR044286">
    <property type="entry name" value="SINL_plant"/>
</dbReference>
<dbReference type="InterPro" id="IPR013083">
    <property type="entry name" value="Znf_RING/FYVE/PHD"/>
</dbReference>
<dbReference type="InterPro" id="IPR013010">
    <property type="entry name" value="Znf_SIAH"/>
</dbReference>
<dbReference type="PANTHER" id="PTHR46632">
    <property type="entry name" value="E3 UBIQUITIN-PROTEIN LIGASE SINA-LIKE 4"/>
    <property type="match status" value="1"/>
</dbReference>
<dbReference type="PANTHER" id="PTHR46632:SF22">
    <property type="entry name" value="RING-TYPE E3 UBIQUITIN TRANSFERASE"/>
    <property type="match status" value="1"/>
</dbReference>
<dbReference type="Pfam" id="PF21362">
    <property type="entry name" value="Sina_RING"/>
    <property type="match status" value="1"/>
</dbReference>
<dbReference type="Pfam" id="PF21361">
    <property type="entry name" value="Sina_ZnF"/>
    <property type="match status" value="1"/>
</dbReference>
<dbReference type="SUPFAM" id="SSF49599">
    <property type="entry name" value="TRAF domain-like"/>
    <property type="match status" value="1"/>
</dbReference>
<dbReference type="PROSITE" id="PS51081">
    <property type="entry name" value="ZF_SIAH"/>
    <property type="match status" value="1"/>
</dbReference>
<reference key="1">
    <citation type="journal article" date="2000" name="Nature">
        <title>Sequence and analysis of chromosome 1 of the plant Arabidopsis thaliana.</title>
        <authorList>
            <person name="Theologis A."/>
            <person name="Ecker J.R."/>
            <person name="Palm C.J."/>
            <person name="Federspiel N.A."/>
            <person name="Kaul S."/>
            <person name="White O."/>
            <person name="Alonso J."/>
            <person name="Altafi H."/>
            <person name="Araujo R."/>
            <person name="Bowman C.L."/>
            <person name="Brooks S.Y."/>
            <person name="Buehler E."/>
            <person name="Chan A."/>
            <person name="Chao Q."/>
            <person name="Chen H."/>
            <person name="Cheuk R.F."/>
            <person name="Chin C.W."/>
            <person name="Chung M.K."/>
            <person name="Conn L."/>
            <person name="Conway A.B."/>
            <person name="Conway A.R."/>
            <person name="Creasy T.H."/>
            <person name="Dewar K."/>
            <person name="Dunn P."/>
            <person name="Etgu P."/>
            <person name="Feldblyum T.V."/>
            <person name="Feng J.-D."/>
            <person name="Fong B."/>
            <person name="Fujii C.Y."/>
            <person name="Gill J.E."/>
            <person name="Goldsmith A.D."/>
            <person name="Haas B."/>
            <person name="Hansen N.F."/>
            <person name="Hughes B."/>
            <person name="Huizar L."/>
            <person name="Hunter J.L."/>
            <person name="Jenkins J."/>
            <person name="Johnson-Hopson C."/>
            <person name="Khan S."/>
            <person name="Khaykin E."/>
            <person name="Kim C.J."/>
            <person name="Koo H.L."/>
            <person name="Kremenetskaia I."/>
            <person name="Kurtz D.B."/>
            <person name="Kwan A."/>
            <person name="Lam B."/>
            <person name="Langin-Hooper S."/>
            <person name="Lee A."/>
            <person name="Lee J.M."/>
            <person name="Lenz C.A."/>
            <person name="Li J.H."/>
            <person name="Li Y.-P."/>
            <person name="Lin X."/>
            <person name="Liu S.X."/>
            <person name="Liu Z.A."/>
            <person name="Luros J.S."/>
            <person name="Maiti R."/>
            <person name="Marziali A."/>
            <person name="Militscher J."/>
            <person name="Miranda M."/>
            <person name="Nguyen M."/>
            <person name="Nierman W.C."/>
            <person name="Osborne B.I."/>
            <person name="Pai G."/>
            <person name="Peterson J."/>
            <person name="Pham P.K."/>
            <person name="Rizzo M."/>
            <person name="Rooney T."/>
            <person name="Rowley D."/>
            <person name="Sakano H."/>
            <person name="Salzberg S.L."/>
            <person name="Schwartz J.R."/>
            <person name="Shinn P."/>
            <person name="Southwick A.M."/>
            <person name="Sun H."/>
            <person name="Tallon L.J."/>
            <person name="Tambunga G."/>
            <person name="Toriumi M.J."/>
            <person name="Town C.D."/>
            <person name="Utterback T."/>
            <person name="Van Aken S."/>
            <person name="Vaysberg M."/>
            <person name="Vysotskaia V.S."/>
            <person name="Walker M."/>
            <person name="Wu D."/>
            <person name="Yu G."/>
            <person name="Fraser C.M."/>
            <person name="Venter J.C."/>
            <person name="Davis R.W."/>
        </authorList>
    </citation>
    <scope>NUCLEOTIDE SEQUENCE [LARGE SCALE GENOMIC DNA]</scope>
    <source>
        <strain>cv. Columbia</strain>
    </source>
</reference>
<reference key="2">
    <citation type="journal article" date="2017" name="Plant J.">
        <title>Araport11: a complete reannotation of the Arabidopsis thaliana reference genome.</title>
        <authorList>
            <person name="Cheng C.Y."/>
            <person name="Krishnakumar V."/>
            <person name="Chan A.P."/>
            <person name="Thibaud-Nissen F."/>
            <person name="Schobel S."/>
            <person name="Town C.D."/>
        </authorList>
    </citation>
    <scope>GENOME REANNOTATION</scope>
    <source>
        <strain>cv. Columbia</strain>
    </source>
</reference>
<reference key="3">
    <citation type="journal article" date="2003" name="Science">
        <title>Empirical analysis of transcriptional activity in the Arabidopsis genome.</title>
        <authorList>
            <person name="Yamada K."/>
            <person name="Lim J."/>
            <person name="Dale J.M."/>
            <person name="Chen H."/>
            <person name="Shinn P."/>
            <person name="Palm C.J."/>
            <person name="Southwick A.M."/>
            <person name="Wu H.C."/>
            <person name="Kim C.J."/>
            <person name="Nguyen M."/>
            <person name="Pham P.K."/>
            <person name="Cheuk R.F."/>
            <person name="Karlin-Newmann G."/>
            <person name="Liu S.X."/>
            <person name="Lam B."/>
            <person name="Sakano H."/>
            <person name="Wu T."/>
            <person name="Yu G."/>
            <person name="Miranda M."/>
            <person name="Quach H.L."/>
            <person name="Tripp M."/>
            <person name="Chang C.H."/>
            <person name="Lee J.M."/>
            <person name="Toriumi M.J."/>
            <person name="Chan M.M."/>
            <person name="Tang C.C."/>
            <person name="Onodera C.S."/>
            <person name="Deng J.M."/>
            <person name="Akiyama K."/>
            <person name="Ansari Y."/>
            <person name="Arakawa T."/>
            <person name="Banh J."/>
            <person name="Banno F."/>
            <person name="Bowser L."/>
            <person name="Brooks S.Y."/>
            <person name="Carninci P."/>
            <person name="Chao Q."/>
            <person name="Choy N."/>
            <person name="Enju A."/>
            <person name="Goldsmith A.D."/>
            <person name="Gurjal M."/>
            <person name="Hansen N.F."/>
            <person name="Hayashizaki Y."/>
            <person name="Johnson-Hopson C."/>
            <person name="Hsuan V.W."/>
            <person name="Iida K."/>
            <person name="Karnes M."/>
            <person name="Khan S."/>
            <person name="Koesema E."/>
            <person name="Ishida J."/>
            <person name="Jiang P.X."/>
            <person name="Jones T."/>
            <person name="Kawai J."/>
            <person name="Kamiya A."/>
            <person name="Meyers C."/>
            <person name="Nakajima M."/>
            <person name="Narusaka M."/>
            <person name="Seki M."/>
            <person name="Sakurai T."/>
            <person name="Satou M."/>
            <person name="Tamse R."/>
            <person name="Vaysberg M."/>
            <person name="Wallender E.K."/>
            <person name="Wong C."/>
            <person name="Yamamura Y."/>
            <person name="Yuan S."/>
            <person name="Shinozaki K."/>
            <person name="Davis R.W."/>
            <person name="Theologis A."/>
            <person name="Ecker J.R."/>
        </authorList>
    </citation>
    <scope>NUCLEOTIDE SEQUENCE [LARGE SCALE MRNA] (ISOFORM 2)</scope>
    <source>
        <strain>cv. Columbia</strain>
    </source>
</reference>
<name>SINL5_ARATH</name>
<keyword id="KW-0025">Alternative splicing</keyword>
<keyword id="KW-0479">Metal-binding</keyword>
<keyword id="KW-1185">Reference proteome</keyword>
<keyword id="KW-0808">Transferase</keyword>
<keyword id="KW-0833">Ubl conjugation pathway</keyword>
<keyword id="KW-0862">Zinc</keyword>
<keyword id="KW-0863">Zinc-finger</keyword>